<accession>Q9FI21</accession>
<accession>Q84WI1</accession>
<name>BBE28_ARATH</name>
<gene>
    <name evidence="8" type="ordered locus">At5g44440</name>
    <name evidence="9" type="ORF">MFC16.10</name>
</gene>
<dbReference type="EC" id="1.1.1.-" evidence="1"/>
<dbReference type="EMBL" id="AB017065">
    <property type="protein sequence ID" value="BAB09151.1"/>
    <property type="molecule type" value="Genomic_DNA"/>
</dbReference>
<dbReference type="EMBL" id="CP002688">
    <property type="protein sequence ID" value="AED95109.1"/>
    <property type="molecule type" value="Genomic_DNA"/>
</dbReference>
<dbReference type="EMBL" id="BT003336">
    <property type="protein sequence ID" value="AAO29955.1"/>
    <property type="molecule type" value="mRNA"/>
</dbReference>
<dbReference type="EMBL" id="BT008866">
    <property type="protein sequence ID" value="AAP68305.1"/>
    <property type="molecule type" value="mRNA"/>
</dbReference>
<dbReference type="RefSeq" id="NP_199257.1">
    <molecule id="Q9FI21-1"/>
    <property type="nucleotide sequence ID" value="NM_123811.3"/>
</dbReference>
<dbReference type="PDB" id="5D79">
    <property type="method" value="X-ray"/>
    <property type="resolution" value="1.85 A"/>
    <property type="chains" value="A/B=1-533"/>
</dbReference>
<dbReference type="PDBsum" id="5D79"/>
<dbReference type="SMR" id="Q9FI21"/>
<dbReference type="STRING" id="3702.Q9FI21"/>
<dbReference type="GlyGen" id="Q9FI21">
    <property type="glycosylation" value="3 sites"/>
</dbReference>
<dbReference type="PaxDb" id="3702-AT5G44440.1"/>
<dbReference type="EnsemblPlants" id="AT5G44440.1">
    <molecule id="Q9FI21-1"/>
    <property type="protein sequence ID" value="AT5G44440.1"/>
    <property type="gene ID" value="AT5G44440"/>
</dbReference>
<dbReference type="GeneID" id="834471"/>
<dbReference type="Gramene" id="AT5G44440.1">
    <molecule id="Q9FI21-1"/>
    <property type="protein sequence ID" value="AT5G44440.1"/>
    <property type="gene ID" value="AT5G44440"/>
</dbReference>
<dbReference type="KEGG" id="ath:AT5G44440"/>
<dbReference type="Araport" id="AT5G44440"/>
<dbReference type="TAIR" id="AT5G44440"/>
<dbReference type="eggNOG" id="ENOG502QVGN">
    <property type="taxonomic scope" value="Eukaryota"/>
</dbReference>
<dbReference type="HOGENOM" id="CLU_018354_6_0_1"/>
<dbReference type="InParanoid" id="Q9FI21"/>
<dbReference type="OMA" id="LESKHCT"/>
<dbReference type="PhylomeDB" id="Q9FI21"/>
<dbReference type="BRENDA" id="1.21.3.3">
    <property type="organism ID" value="399"/>
</dbReference>
<dbReference type="PRO" id="PR:Q9FI21"/>
<dbReference type="Proteomes" id="UP000006548">
    <property type="component" value="Chromosome 5"/>
</dbReference>
<dbReference type="ExpressionAtlas" id="Q9FI21">
    <property type="expression patterns" value="baseline and differential"/>
</dbReference>
<dbReference type="GO" id="GO:0005576">
    <property type="term" value="C:extracellular region"/>
    <property type="evidence" value="ECO:0007669"/>
    <property type="project" value="UniProtKB-KW"/>
</dbReference>
<dbReference type="GO" id="GO:0009505">
    <property type="term" value="C:plant-type cell wall"/>
    <property type="evidence" value="ECO:0000250"/>
    <property type="project" value="UniProtKB"/>
</dbReference>
<dbReference type="GO" id="GO:0071949">
    <property type="term" value="F:FAD binding"/>
    <property type="evidence" value="ECO:0007669"/>
    <property type="project" value="InterPro"/>
</dbReference>
<dbReference type="GO" id="GO:0016491">
    <property type="term" value="F:oxidoreductase activity"/>
    <property type="evidence" value="ECO:0007669"/>
    <property type="project" value="UniProtKB-KW"/>
</dbReference>
<dbReference type="GO" id="GO:0009651">
    <property type="term" value="P:response to salt stress"/>
    <property type="evidence" value="ECO:0000315"/>
    <property type="project" value="UniProtKB"/>
</dbReference>
<dbReference type="FunFam" id="3.30.43.10:FF:000004">
    <property type="entry name" value="Berberine bridge enzyme-like 15"/>
    <property type="match status" value="1"/>
</dbReference>
<dbReference type="Gene3D" id="3.30.465.10">
    <property type="match status" value="1"/>
</dbReference>
<dbReference type="Gene3D" id="3.40.462.20">
    <property type="match status" value="1"/>
</dbReference>
<dbReference type="Gene3D" id="3.30.43.10">
    <property type="entry name" value="Uridine Diphospho-n-acetylenolpyruvylglucosamine Reductase, domain 2"/>
    <property type="match status" value="1"/>
</dbReference>
<dbReference type="InterPro" id="IPR012951">
    <property type="entry name" value="BBE"/>
</dbReference>
<dbReference type="InterPro" id="IPR016166">
    <property type="entry name" value="FAD-bd_PCMH"/>
</dbReference>
<dbReference type="InterPro" id="IPR036318">
    <property type="entry name" value="FAD-bd_PCMH-like_sf"/>
</dbReference>
<dbReference type="InterPro" id="IPR016167">
    <property type="entry name" value="FAD-bd_PCMH_sub1"/>
</dbReference>
<dbReference type="InterPro" id="IPR016169">
    <property type="entry name" value="FAD-bd_PCMH_sub2"/>
</dbReference>
<dbReference type="InterPro" id="IPR006094">
    <property type="entry name" value="Oxid_FAD_bind_N"/>
</dbReference>
<dbReference type="PANTHER" id="PTHR32448">
    <property type="entry name" value="OS08G0158400 PROTEIN"/>
    <property type="match status" value="1"/>
</dbReference>
<dbReference type="Pfam" id="PF08031">
    <property type="entry name" value="BBE"/>
    <property type="match status" value="1"/>
</dbReference>
<dbReference type="Pfam" id="PF01565">
    <property type="entry name" value="FAD_binding_4"/>
    <property type="match status" value="1"/>
</dbReference>
<dbReference type="SUPFAM" id="SSF56176">
    <property type="entry name" value="FAD-binding/transporter-associated domain-like"/>
    <property type="match status" value="1"/>
</dbReference>
<dbReference type="PROSITE" id="PS51387">
    <property type="entry name" value="FAD_PCMH"/>
    <property type="match status" value="1"/>
</dbReference>
<proteinExistence type="evidence at protein level"/>
<reference key="1">
    <citation type="journal article" date="1999" name="DNA Res.">
        <title>Structural analysis of Arabidopsis thaliana chromosome 5. IX. Sequence features of the regions of 1,011,550 bp covered by seventeen P1 and TAC clones.</title>
        <authorList>
            <person name="Kaneko T."/>
            <person name="Katoh T."/>
            <person name="Sato S."/>
            <person name="Nakamura Y."/>
            <person name="Asamizu E."/>
            <person name="Kotani H."/>
            <person name="Miyajima N."/>
            <person name="Tabata S."/>
        </authorList>
    </citation>
    <scope>NUCLEOTIDE SEQUENCE [LARGE SCALE GENOMIC DNA]</scope>
    <source>
        <strain>cv. Columbia</strain>
    </source>
</reference>
<reference key="2">
    <citation type="journal article" date="2017" name="Plant J.">
        <title>Araport11: a complete reannotation of the Arabidopsis thaliana reference genome.</title>
        <authorList>
            <person name="Cheng C.Y."/>
            <person name="Krishnakumar V."/>
            <person name="Chan A.P."/>
            <person name="Thibaud-Nissen F."/>
            <person name="Schobel S."/>
            <person name="Town C.D."/>
        </authorList>
    </citation>
    <scope>GENOME REANNOTATION</scope>
    <source>
        <strain>cv. Columbia</strain>
    </source>
</reference>
<reference key="3">
    <citation type="journal article" date="2003" name="Science">
        <title>Empirical analysis of transcriptional activity in the Arabidopsis genome.</title>
        <authorList>
            <person name="Yamada K."/>
            <person name="Lim J."/>
            <person name="Dale J.M."/>
            <person name="Chen H."/>
            <person name="Shinn P."/>
            <person name="Palm C.J."/>
            <person name="Southwick A.M."/>
            <person name="Wu H.C."/>
            <person name="Kim C.J."/>
            <person name="Nguyen M."/>
            <person name="Pham P.K."/>
            <person name="Cheuk R.F."/>
            <person name="Karlin-Newmann G."/>
            <person name="Liu S.X."/>
            <person name="Lam B."/>
            <person name="Sakano H."/>
            <person name="Wu T."/>
            <person name="Yu G."/>
            <person name="Miranda M."/>
            <person name="Quach H.L."/>
            <person name="Tripp M."/>
            <person name="Chang C.H."/>
            <person name="Lee J.M."/>
            <person name="Toriumi M.J."/>
            <person name="Chan M.M."/>
            <person name="Tang C.C."/>
            <person name="Onodera C.S."/>
            <person name="Deng J.M."/>
            <person name="Akiyama K."/>
            <person name="Ansari Y."/>
            <person name="Arakawa T."/>
            <person name="Banh J."/>
            <person name="Banno F."/>
            <person name="Bowser L."/>
            <person name="Brooks S.Y."/>
            <person name="Carninci P."/>
            <person name="Chao Q."/>
            <person name="Choy N."/>
            <person name="Enju A."/>
            <person name="Goldsmith A.D."/>
            <person name="Gurjal M."/>
            <person name="Hansen N.F."/>
            <person name="Hayashizaki Y."/>
            <person name="Johnson-Hopson C."/>
            <person name="Hsuan V.W."/>
            <person name="Iida K."/>
            <person name="Karnes M."/>
            <person name="Khan S."/>
            <person name="Koesema E."/>
            <person name="Ishida J."/>
            <person name="Jiang P.X."/>
            <person name="Jones T."/>
            <person name="Kawai J."/>
            <person name="Kamiya A."/>
            <person name="Meyers C."/>
            <person name="Nakajima M."/>
            <person name="Narusaka M."/>
            <person name="Seki M."/>
            <person name="Sakurai T."/>
            <person name="Satou M."/>
            <person name="Tamse R."/>
            <person name="Vaysberg M."/>
            <person name="Wallender E.K."/>
            <person name="Wong C."/>
            <person name="Yamamura Y."/>
            <person name="Yuan S."/>
            <person name="Shinozaki K."/>
            <person name="Davis R.W."/>
            <person name="Theologis A."/>
            <person name="Ecker J.R."/>
        </authorList>
    </citation>
    <scope>NUCLEOTIDE SEQUENCE [LARGE SCALE MRNA] (ISOFORM 2)</scope>
    <source>
        <strain>cv. Columbia</strain>
    </source>
</reference>
<reference key="4">
    <citation type="journal article" date="2015" name="J. Biol. Chem.">
        <title>Oxidation of monolignols by members of the berberine bridge enzyme family suggests a role in plant cell wall metabolism.</title>
        <authorList>
            <person name="Daniel B."/>
            <person name="Pavkov-Keller T."/>
            <person name="Steiner B."/>
            <person name="Dordic A."/>
            <person name="Gutmann A."/>
            <person name="Nidetzky B."/>
            <person name="Sensen C.W."/>
            <person name="van der Graaff E."/>
            <person name="Wallner S."/>
            <person name="Gruber K."/>
            <person name="Macheroux P."/>
        </authorList>
    </citation>
    <scope>GENE FAMILY</scope>
    <scope>NOMENCLATURE</scope>
</reference>
<reference key="5">
    <citation type="journal article" date="2016" name="PLoS ONE">
        <title>Structure of a berberine bridge enzyme-like enzyme with an active site specific to the plant family brassicaceae.</title>
        <authorList>
            <person name="Daniel B."/>
            <person name="Wallner S."/>
            <person name="Steiner B."/>
            <person name="Oberdorfer G."/>
            <person name="Kumar P."/>
            <person name="van der Graaff E."/>
            <person name="Roitsch T."/>
            <person name="Sensen C.W."/>
            <person name="Gruber K."/>
            <person name="Macheroux P."/>
        </authorList>
    </citation>
    <scope>X-RAY CRYSTALLOGRAPHY (1.85 ANGSTROMS) IN COMPLEX WITH FAD</scope>
    <scope>FUNCTION</scope>
    <scope>DISRUPTION PHENOTYPE</scope>
    <scope>DISULFIDE BONDS</scope>
    <scope>INDUCTION BY SALT STRESS</scope>
    <source>
        <strain>cv. Columbia</strain>
    </source>
</reference>
<protein>
    <recommendedName>
        <fullName evidence="6">Berberine bridge enzyme-like 28</fullName>
        <shortName evidence="6">AtBBE-like 28</shortName>
        <ecNumber evidence="1">1.1.1.-</ecNumber>
    </recommendedName>
</protein>
<feature type="signal peptide" evidence="2">
    <location>
        <begin position="1"/>
        <end position="23"/>
    </location>
</feature>
<feature type="chain" id="PRO_5008179916" description="Berberine bridge enzyme-like 28">
    <location>
        <begin position="24"/>
        <end position="533"/>
    </location>
</feature>
<feature type="domain" description="FAD-binding PCMH-type" evidence="4">
    <location>
        <begin position="74"/>
        <end position="249"/>
    </location>
</feature>
<feature type="modified residue" description="Pros-8alpha-FAD histidine" evidence="5">
    <location>
        <position position="111"/>
    </location>
</feature>
<feature type="glycosylation site" description="N-linked (GlcNAc...) asparagine" evidence="3">
    <location>
        <position position="142"/>
    </location>
</feature>
<feature type="glycosylation site" description="N-linked (GlcNAc...) asparagine" evidence="3">
    <location>
        <position position="440"/>
    </location>
</feature>
<feature type="disulfide bond" evidence="5 10">
    <location>
        <begin position="34"/>
        <end position="96"/>
    </location>
</feature>
<feature type="splice variant" id="VSP_058627" description="In isoform 2.">
    <location>
        <begin position="1"/>
        <end position="38"/>
    </location>
</feature>
<feature type="helix" evidence="11">
    <location>
        <begin position="29"/>
        <end position="36"/>
    </location>
</feature>
<feature type="helix" evidence="11">
    <location>
        <begin position="46"/>
        <end position="48"/>
    </location>
</feature>
<feature type="strand" evidence="11">
    <location>
        <begin position="54"/>
        <end position="57"/>
    </location>
</feature>
<feature type="helix" evidence="11">
    <location>
        <begin position="58"/>
        <end position="63"/>
    </location>
</feature>
<feature type="helix" evidence="11">
    <location>
        <begin position="68"/>
        <end position="71"/>
    </location>
</feature>
<feature type="strand" evidence="11">
    <location>
        <begin position="79"/>
        <end position="82"/>
    </location>
</feature>
<feature type="helix" evidence="11">
    <location>
        <begin position="87"/>
        <end position="100"/>
    </location>
</feature>
<feature type="strand" evidence="11">
    <location>
        <begin position="103"/>
        <end position="109"/>
    </location>
</feature>
<feature type="turn" evidence="11">
    <location>
        <begin position="116"/>
        <end position="118"/>
    </location>
</feature>
<feature type="strand" evidence="11">
    <location>
        <begin position="121"/>
        <end position="123"/>
    </location>
</feature>
<feature type="strand" evidence="11">
    <location>
        <begin position="125"/>
        <end position="129"/>
    </location>
</feature>
<feature type="strand" evidence="11">
    <location>
        <begin position="136"/>
        <end position="139"/>
    </location>
</feature>
<feature type="turn" evidence="11">
    <location>
        <begin position="140"/>
        <end position="143"/>
    </location>
</feature>
<feature type="strand" evidence="11">
    <location>
        <begin position="144"/>
        <end position="148"/>
    </location>
</feature>
<feature type="helix" evidence="11">
    <location>
        <begin position="153"/>
        <end position="163"/>
    </location>
</feature>
<feature type="strand" evidence="11">
    <location>
        <begin position="165"/>
        <end position="168"/>
    </location>
</feature>
<feature type="helix" evidence="11">
    <location>
        <begin position="179"/>
        <end position="184"/>
    </location>
</feature>
<feature type="helix" evidence="11">
    <location>
        <begin position="192"/>
        <end position="195"/>
    </location>
</feature>
<feature type="helix" evidence="11">
    <location>
        <begin position="199"/>
        <end position="201"/>
    </location>
</feature>
<feature type="strand" evidence="11">
    <location>
        <begin position="202"/>
        <end position="208"/>
    </location>
</feature>
<feature type="helix" evidence="11">
    <location>
        <begin position="217"/>
        <end position="220"/>
    </location>
</feature>
<feature type="helix" evidence="11">
    <location>
        <begin position="222"/>
        <end position="227"/>
    </location>
</feature>
<feature type="turn" evidence="11">
    <location>
        <begin position="228"/>
        <end position="230"/>
    </location>
</feature>
<feature type="helix" evidence="11">
    <location>
        <begin position="233"/>
        <end position="235"/>
    </location>
</feature>
<feature type="strand" evidence="11">
    <location>
        <begin position="238"/>
        <end position="245"/>
    </location>
</feature>
<feature type="strand" evidence="11">
    <location>
        <begin position="253"/>
        <end position="260"/>
    </location>
</feature>
<feature type="helix" evidence="11">
    <location>
        <begin position="263"/>
        <end position="276"/>
    </location>
</feature>
<feature type="turn" evidence="11">
    <location>
        <begin position="277"/>
        <end position="279"/>
    </location>
</feature>
<feature type="strand" evidence="11">
    <location>
        <begin position="284"/>
        <end position="292"/>
    </location>
</feature>
<feature type="strand" evidence="11">
    <location>
        <begin position="296"/>
        <end position="308"/>
    </location>
</feature>
<feature type="helix" evidence="11">
    <location>
        <begin position="310"/>
        <end position="320"/>
    </location>
</feature>
<feature type="helix" evidence="11">
    <location>
        <begin position="322"/>
        <end position="324"/>
    </location>
</feature>
<feature type="helix" evidence="11">
    <location>
        <begin position="328"/>
        <end position="330"/>
    </location>
</feature>
<feature type="strand" evidence="11">
    <location>
        <begin position="331"/>
        <end position="334"/>
    </location>
</feature>
<feature type="helix" evidence="11">
    <location>
        <begin position="336"/>
        <end position="343"/>
    </location>
</feature>
<feature type="helix" evidence="11">
    <location>
        <begin position="352"/>
        <end position="356"/>
    </location>
</feature>
<feature type="strand" evidence="11">
    <location>
        <begin position="363"/>
        <end position="374"/>
    </location>
</feature>
<feature type="helix" evidence="11">
    <location>
        <begin position="378"/>
        <end position="388"/>
    </location>
</feature>
<feature type="helix" evidence="11">
    <location>
        <begin position="391"/>
        <end position="393"/>
    </location>
</feature>
<feature type="strand" evidence="11">
    <location>
        <begin position="396"/>
        <end position="402"/>
    </location>
</feature>
<feature type="helix" evidence="11">
    <location>
        <begin position="406"/>
        <end position="409"/>
    </location>
</feature>
<feature type="helix" evidence="11">
    <location>
        <begin position="412"/>
        <end position="414"/>
    </location>
</feature>
<feature type="strand" evidence="11">
    <location>
        <begin position="425"/>
        <end position="434"/>
    </location>
</feature>
<feature type="helix" evidence="11">
    <location>
        <begin position="435"/>
        <end position="439"/>
    </location>
</feature>
<feature type="helix" evidence="11">
    <location>
        <begin position="441"/>
        <end position="458"/>
    </location>
</feature>
<feature type="helix" evidence="11">
    <location>
        <begin position="459"/>
        <end position="461"/>
    </location>
</feature>
<feature type="helix" evidence="11">
    <location>
        <begin position="476"/>
        <end position="478"/>
    </location>
</feature>
<feature type="strand" evidence="11">
    <location>
        <begin position="482"/>
        <end position="487"/>
    </location>
</feature>
<feature type="helix" evidence="11">
    <location>
        <begin position="488"/>
        <end position="500"/>
    </location>
</feature>
<feature type="helix" evidence="11">
    <location>
        <begin position="501"/>
        <end position="503"/>
    </location>
</feature>
<feature type="helix" evidence="11">
    <location>
        <begin position="504"/>
        <end position="514"/>
    </location>
</feature>
<comment type="function">
    <text evidence="5">Involved in adaptation to salt stress.</text>
</comment>
<comment type="cofactor">
    <cofactor evidence="5">
        <name>FAD</name>
        <dbReference type="ChEBI" id="CHEBI:57692"/>
    </cofactor>
</comment>
<comment type="subcellular location">
    <subcellularLocation>
        <location evidence="1">Secreted</location>
        <location evidence="1">Cell wall</location>
    </subcellularLocation>
</comment>
<comment type="alternative products">
    <event type="alternative splicing"/>
    <isoform>
        <id>Q9FI21-1</id>
        <name>1</name>
        <sequence type="displayed"/>
    </isoform>
    <isoform>
        <id>Q9FI21-2</id>
        <name>2</name>
        <sequence type="described" ref="VSP_058627"/>
    </isoform>
</comment>
<comment type="induction">
    <text evidence="5">By salt stress, specifically in the root.</text>
</comment>
<comment type="disruption phenotype">
    <text evidence="5">No obvious developmental defects but reduced biomass and reduced leaves number. Increased sensitivity to salt stress.</text>
</comment>
<comment type="similarity">
    <text evidence="7">Belongs to the oxygen-dependent FAD-linked oxidoreductase family.</text>
</comment>
<evidence type="ECO:0000250" key="1">
    <source>
        <dbReference type="UniProtKB" id="O64743"/>
    </source>
</evidence>
<evidence type="ECO:0000255" key="2"/>
<evidence type="ECO:0000255" key="3">
    <source>
        <dbReference type="PROSITE-ProRule" id="PRU00498"/>
    </source>
</evidence>
<evidence type="ECO:0000255" key="4">
    <source>
        <dbReference type="PROSITE-ProRule" id="PRU00718"/>
    </source>
</evidence>
<evidence type="ECO:0000269" key="5">
    <source>
    </source>
</evidence>
<evidence type="ECO:0000303" key="6">
    <source>
    </source>
</evidence>
<evidence type="ECO:0000305" key="7"/>
<evidence type="ECO:0000312" key="8">
    <source>
        <dbReference type="Araport" id="AT5G44440"/>
    </source>
</evidence>
<evidence type="ECO:0000312" key="9">
    <source>
        <dbReference type="EMBL" id="BAB09151.1"/>
    </source>
</evidence>
<evidence type="ECO:0007744" key="10">
    <source>
        <dbReference type="PDB" id="5D79"/>
    </source>
</evidence>
<evidence type="ECO:0007829" key="11">
    <source>
        <dbReference type="PDB" id="5D79"/>
    </source>
</evidence>
<keyword id="KW-0002">3D-structure</keyword>
<keyword id="KW-0025">Alternative splicing</keyword>
<keyword id="KW-0134">Cell wall</keyword>
<keyword id="KW-1015">Disulfide bond</keyword>
<keyword id="KW-0274">FAD</keyword>
<keyword id="KW-0285">Flavoprotein</keyword>
<keyword id="KW-0325">Glycoprotein</keyword>
<keyword id="KW-0547">Nucleotide-binding</keyword>
<keyword id="KW-0560">Oxidoreductase</keyword>
<keyword id="KW-1185">Reference proteome</keyword>
<keyword id="KW-0964">Secreted</keyword>
<keyword id="KW-0732">Signal</keyword>
<sequence>MEFSSFLFTILLFSLNISPLVSAHGSNHEDFLKCLSYRMNDNTVEPKVIHTSKDSSFFSILDSSIQNPRFSVSETPKPVSIITPVKASDVQTVIRCAQLHGIHVRTRSAGHCYEGLSYIAYNKPFAVIDLRNLRSISLDVDNRTGWVQTGATAGELYYEIGKTTKSLAFPAGIHPTVGVGGQFSGGGYGTLLRKYGLAADNIIDALVVDASGRILDRQAMGEDYFWAIRGGGGSSFGVILSWKVKLVDVPSTITVFKVQKTSKKEAVRIIKKWQYAADKVPDDLFIRTTLERSNKNAVHALFTGLYIGPVNNLLALMEEKFPELGLEKEGCEEMSWIESVLWFADFPKGESLGVLTNRERTSLSFKGKDDFVQEPIPEAAIQEIWRRLEAPEARLGKIILTPFGGKMSEMAEYETPFPHRGGNLYEIQYVAYWREEEDKNKTETDKYLKWVDSVYEFMTPYVSKSPRGAYVNFKDMDLGMYLGKKKTKYEEGKSWGVKYFKNNFERLVRVKTRVDPTDFFCDEQSIPLVNKVT</sequence>
<organism>
    <name type="scientific">Arabidopsis thaliana</name>
    <name type="common">Mouse-ear cress</name>
    <dbReference type="NCBI Taxonomy" id="3702"/>
    <lineage>
        <taxon>Eukaryota</taxon>
        <taxon>Viridiplantae</taxon>
        <taxon>Streptophyta</taxon>
        <taxon>Embryophyta</taxon>
        <taxon>Tracheophyta</taxon>
        <taxon>Spermatophyta</taxon>
        <taxon>Magnoliopsida</taxon>
        <taxon>eudicotyledons</taxon>
        <taxon>Gunneridae</taxon>
        <taxon>Pentapetalae</taxon>
        <taxon>rosids</taxon>
        <taxon>malvids</taxon>
        <taxon>Brassicales</taxon>
        <taxon>Brassicaceae</taxon>
        <taxon>Camelineae</taxon>
        <taxon>Arabidopsis</taxon>
    </lineage>
</organism>